<organism>
    <name type="scientific">Leishmania braziliensis</name>
    <dbReference type="NCBI Taxonomy" id="5660"/>
    <lineage>
        <taxon>Eukaryota</taxon>
        <taxon>Discoba</taxon>
        <taxon>Euglenozoa</taxon>
        <taxon>Kinetoplastea</taxon>
        <taxon>Metakinetoplastina</taxon>
        <taxon>Trypanosomatida</taxon>
        <taxon>Trypanosomatidae</taxon>
        <taxon>Leishmaniinae</taxon>
        <taxon>Leishmania</taxon>
        <taxon>Leishmania braziliensis species complex</taxon>
    </lineage>
</organism>
<gene>
    <name type="primary">ISP1</name>
    <name type="ORF">LbrM15_V2.0340</name>
    <name type="ORF">LbrM_15_0340</name>
</gene>
<dbReference type="EMBL" id="FR798989">
    <property type="protein sequence ID" value="CAM42051.1"/>
    <property type="molecule type" value="Genomic_DNA"/>
</dbReference>
<dbReference type="SMR" id="A4H804"/>
<dbReference type="STRING" id="5660.A4H804"/>
<dbReference type="KEGG" id="lbz:LBRM_15_0340"/>
<dbReference type="VEuPathDB" id="TriTrypDB:LbrM.15.0340"/>
<dbReference type="InParanoid" id="A4H804"/>
<dbReference type="OMA" id="NDAANHQ"/>
<dbReference type="Proteomes" id="UP000007258">
    <property type="component" value="Chromosome 15"/>
</dbReference>
<dbReference type="GO" id="GO:0004867">
    <property type="term" value="F:serine-type endopeptidase inhibitor activity"/>
    <property type="evidence" value="ECO:0007669"/>
    <property type="project" value="InterPro"/>
</dbReference>
<dbReference type="Gene3D" id="2.60.40.550">
    <property type="entry name" value="Ecotin"/>
    <property type="match status" value="1"/>
</dbReference>
<dbReference type="InterPro" id="IPR036198">
    <property type="entry name" value="Ecotin_sf"/>
</dbReference>
<dbReference type="InterPro" id="IPR005658">
    <property type="entry name" value="Prot_inh_ecotin"/>
</dbReference>
<dbReference type="PANTHER" id="PTHR35890">
    <property type="match status" value="1"/>
</dbReference>
<dbReference type="PANTHER" id="PTHR35890:SF3">
    <property type="entry name" value="ECOTIN"/>
    <property type="match status" value="1"/>
</dbReference>
<dbReference type="Pfam" id="PF03974">
    <property type="entry name" value="Ecotin"/>
    <property type="match status" value="1"/>
</dbReference>
<dbReference type="SUPFAM" id="SSF49772">
    <property type="entry name" value="Ecotin, trypsin inhibitor"/>
    <property type="match status" value="1"/>
</dbReference>
<proteinExistence type="inferred from homology"/>
<sequence>MSCCKMEAPYPHAESDEKRIVFALDPKGDDAERDQYRLQLIPGRVLEMSRNDAANHQTLSGSIEQHTVEGWGAPFFHVKLAKEAAATLMQVHSEDHVEKSRKFVALSNTPLVPYTSRYPVVVYLPKDAELRYSIWCGGEQMQATTE</sequence>
<accession>A4H804</accession>
<comment type="similarity">
    <text evidence="1">Belongs to the protease inhibitor I11 (ecotin) family.</text>
</comment>
<reference key="1">
    <citation type="journal article" date="2007" name="Nat. Genet.">
        <title>Comparative genomic analysis of three Leishmania species that cause diverse human disease.</title>
        <authorList>
            <person name="Peacock C.S."/>
            <person name="Seeger K."/>
            <person name="Harris D."/>
            <person name="Murphy L."/>
            <person name="Ruiz J.C."/>
            <person name="Quail M.A."/>
            <person name="Peters N."/>
            <person name="Adlem E."/>
            <person name="Tivey A."/>
            <person name="Aslett M."/>
            <person name="Kerhornou A."/>
            <person name="Ivens A."/>
            <person name="Fraser A."/>
            <person name="Rajandream M.-A."/>
            <person name="Carver T."/>
            <person name="Norbertczak H."/>
            <person name="Chillingworth T."/>
            <person name="Hance Z."/>
            <person name="Jagels K."/>
            <person name="Moule S."/>
            <person name="Ormond D."/>
            <person name="Rutter S."/>
            <person name="Sqaures R."/>
            <person name="Whitehead S."/>
            <person name="Rabbinowitsch E."/>
            <person name="Arrowsmith C."/>
            <person name="White B."/>
            <person name="Thurston S."/>
            <person name="Bringaud F."/>
            <person name="Baldauf S.L."/>
            <person name="Faulconbridge A."/>
            <person name="Jeffares D."/>
            <person name="Depledge D.P."/>
            <person name="Oyola S.O."/>
            <person name="Hilley J.D."/>
            <person name="Brito L.O."/>
            <person name="Tosi L.R.O."/>
            <person name="Barrell B."/>
            <person name="Cruz A.K."/>
            <person name="Mottram J.C."/>
            <person name="Smith D.F."/>
            <person name="Berriman M."/>
        </authorList>
    </citation>
    <scope>NUCLEOTIDE SEQUENCE [LARGE SCALE GENOMIC DNA]</scope>
    <source>
        <strain>MHOM/BR/75/M2904</strain>
    </source>
</reference>
<name>ECOT1_LEIBR</name>
<feature type="chain" id="PRO_0000291590" description="Ecotin-like protein 1">
    <location>
        <begin position="1"/>
        <end position="146"/>
    </location>
</feature>
<protein>
    <recommendedName>
        <fullName>Ecotin-like protein 1</fullName>
    </recommendedName>
    <alternativeName>
        <fullName>Inhibitor of serine peptidase 1</fullName>
        <shortName>LbISP1</shortName>
    </alternativeName>
</protein>
<evidence type="ECO:0000305" key="1"/>
<keyword id="KW-1185">Reference proteome</keyword>